<evidence type="ECO:0000255" key="1">
    <source>
        <dbReference type="HAMAP-Rule" id="MF_00227"/>
    </source>
</evidence>
<evidence type="ECO:0000256" key="2">
    <source>
        <dbReference type="SAM" id="MobiDB-lite"/>
    </source>
</evidence>
<name>RNPA_THEFY</name>
<dbReference type="EC" id="3.1.26.5" evidence="1"/>
<dbReference type="EMBL" id="CP000088">
    <property type="protein sequence ID" value="AAZ57149.1"/>
    <property type="molecule type" value="Genomic_DNA"/>
</dbReference>
<dbReference type="RefSeq" id="WP_011293533.1">
    <property type="nucleotide sequence ID" value="NC_007333.1"/>
</dbReference>
<dbReference type="SMR" id="Q47K73"/>
<dbReference type="STRING" id="269800.Tfu_3116"/>
<dbReference type="KEGG" id="tfu:Tfu_3116"/>
<dbReference type="eggNOG" id="COG0594">
    <property type="taxonomic scope" value="Bacteria"/>
</dbReference>
<dbReference type="HOGENOM" id="CLU_117179_4_1_11"/>
<dbReference type="OrthoDB" id="196964at2"/>
<dbReference type="GO" id="GO:0030677">
    <property type="term" value="C:ribonuclease P complex"/>
    <property type="evidence" value="ECO:0007669"/>
    <property type="project" value="TreeGrafter"/>
</dbReference>
<dbReference type="GO" id="GO:0042781">
    <property type="term" value="F:3'-tRNA processing endoribonuclease activity"/>
    <property type="evidence" value="ECO:0007669"/>
    <property type="project" value="TreeGrafter"/>
</dbReference>
<dbReference type="GO" id="GO:0004526">
    <property type="term" value="F:ribonuclease P activity"/>
    <property type="evidence" value="ECO:0007669"/>
    <property type="project" value="UniProtKB-UniRule"/>
</dbReference>
<dbReference type="GO" id="GO:0000049">
    <property type="term" value="F:tRNA binding"/>
    <property type="evidence" value="ECO:0007669"/>
    <property type="project" value="UniProtKB-UniRule"/>
</dbReference>
<dbReference type="GO" id="GO:0001682">
    <property type="term" value="P:tRNA 5'-leader removal"/>
    <property type="evidence" value="ECO:0007669"/>
    <property type="project" value="UniProtKB-UniRule"/>
</dbReference>
<dbReference type="Gene3D" id="3.30.230.10">
    <property type="match status" value="1"/>
</dbReference>
<dbReference type="HAMAP" id="MF_00227">
    <property type="entry name" value="RNase_P"/>
    <property type="match status" value="1"/>
</dbReference>
<dbReference type="InterPro" id="IPR020568">
    <property type="entry name" value="Ribosomal_Su5_D2-typ_SF"/>
</dbReference>
<dbReference type="InterPro" id="IPR014721">
    <property type="entry name" value="Ribsml_uS5_D2-typ_fold_subgr"/>
</dbReference>
<dbReference type="InterPro" id="IPR000100">
    <property type="entry name" value="RNase_P"/>
</dbReference>
<dbReference type="NCBIfam" id="TIGR00188">
    <property type="entry name" value="rnpA"/>
    <property type="match status" value="1"/>
</dbReference>
<dbReference type="PANTHER" id="PTHR33992">
    <property type="entry name" value="RIBONUCLEASE P PROTEIN COMPONENT"/>
    <property type="match status" value="1"/>
</dbReference>
<dbReference type="PANTHER" id="PTHR33992:SF1">
    <property type="entry name" value="RIBONUCLEASE P PROTEIN COMPONENT"/>
    <property type="match status" value="1"/>
</dbReference>
<dbReference type="Pfam" id="PF00825">
    <property type="entry name" value="Ribonuclease_P"/>
    <property type="match status" value="1"/>
</dbReference>
<dbReference type="SUPFAM" id="SSF54211">
    <property type="entry name" value="Ribosomal protein S5 domain 2-like"/>
    <property type="match status" value="1"/>
</dbReference>
<protein>
    <recommendedName>
        <fullName evidence="1">Ribonuclease P protein component</fullName>
        <shortName evidence="1">RNase P protein</shortName>
        <shortName evidence="1">RNaseP protein</shortName>
        <ecNumber evidence="1">3.1.26.5</ecNumber>
    </recommendedName>
    <alternativeName>
        <fullName evidence="1">Protein C5</fullName>
    </alternativeName>
</protein>
<feature type="chain" id="PRO_1000021487" description="Ribonuclease P protein component">
    <location>
        <begin position="1"/>
        <end position="147"/>
    </location>
</feature>
<feature type="region of interest" description="Disordered" evidence="2">
    <location>
        <begin position="117"/>
        <end position="147"/>
    </location>
</feature>
<reference key="1">
    <citation type="journal article" date="2007" name="J. Bacteriol.">
        <title>Genome sequence and analysis of the soil cellulolytic actinomycete Thermobifida fusca YX.</title>
        <authorList>
            <person name="Lykidis A."/>
            <person name="Mavromatis K."/>
            <person name="Ivanova N."/>
            <person name="Anderson I."/>
            <person name="Land M."/>
            <person name="DiBartolo G."/>
            <person name="Martinez M."/>
            <person name="Lapidus A."/>
            <person name="Lucas S."/>
            <person name="Copeland A."/>
            <person name="Richardson P."/>
            <person name="Wilson D.B."/>
            <person name="Kyrpides N."/>
        </authorList>
    </citation>
    <scope>NUCLEOTIDE SEQUENCE [LARGE SCALE GENOMIC DNA]</scope>
    <source>
        <strain>YX</strain>
    </source>
</reference>
<sequence>MLSPRNRMRRRADFDTALRHGRRAGRNALSVALFVPQDTPDQPGGDAPPRVGFSVSKAVGKAVVRKRVQRRLRHLMRERVGSLPAGSLLVVRAKPQAALLDYSELAAQLDSALRAVTRPRGQSSHRTRASREATSAHTTAVGEQPTQ</sequence>
<keyword id="KW-0255">Endonuclease</keyword>
<keyword id="KW-0378">Hydrolase</keyword>
<keyword id="KW-0540">Nuclease</keyword>
<keyword id="KW-0694">RNA-binding</keyword>
<keyword id="KW-0819">tRNA processing</keyword>
<gene>
    <name evidence="1" type="primary">rnpA</name>
    <name type="ordered locus">Tfu_3116</name>
</gene>
<accession>Q47K73</accession>
<comment type="function">
    <text evidence="1">RNaseP catalyzes the removal of the 5'-leader sequence from pre-tRNA to produce the mature 5'-terminus. It can also cleave other RNA substrates such as 4.5S RNA. The protein component plays an auxiliary but essential role in vivo by binding to the 5'-leader sequence and broadening the substrate specificity of the ribozyme.</text>
</comment>
<comment type="catalytic activity">
    <reaction evidence="1">
        <text>Endonucleolytic cleavage of RNA, removing 5'-extranucleotides from tRNA precursor.</text>
        <dbReference type="EC" id="3.1.26.5"/>
    </reaction>
</comment>
<comment type="subunit">
    <text evidence="1">Consists of a catalytic RNA component (M1 or rnpB) and a protein subunit.</text>
</comment>
<comment type="similarity">
    <text evidence="1">Belongs to the RnpA family.</text>
</comment>
<proteinExistence type="inferred from homology"/>
<organism>
    <name type="scientific">Thermobifida fusca (strain YX)</name>
    <dbReference type="NCBI Taxonomy" id="269800"/>
    <lineage>
        <taxon>Bacteria</taxon>
        <taxon>Bacillati</taxon>
        <taxon>Actinomycetota</taxon>
        <taxon>Actinomycetes</taxon>
        <taxon>Streptosporangiales</taxon>
        <taxon>Nocardiopsidaceae</taxon>
        <taxon>Thermobifida</taxon>
    </lineage>
</organism>